<dbReference type="EC" id="2.3.1.225"/>
<dbReference type="EMBL" id="AC006304">
    <property type="protein sequence ID" value="AAD20110.1"/>
    <property type="status" value="ALT_SEQ"/>
    <property type="molecule type" value="Genomic_DNA"/>
</dbReference>
<dbReference type="EMBL" id="CP002685">
    <property type="protein sequence ID" value="AEC06292.1"/>
    <property type="molecule type" value="Genomic_DNA"/>
</dbReference>
<dbReference type="EMBL" id="BT030047">
    <property type="protein sequence ID" value="ABN04785.1"/>
    <property type="molecule type" value="mRNA"/>
</dbReference>
<dbReference type="PIR" id="D84515">
    <property type="entry name" value="D84515"/>
</dbReference>
<dbReference type="RefSeq" id="NP_973453.2">
    <molecule id="Q3EC11-1"/>
    <property type="nucleotide sequence ID" value="NM_201724.3"/>
</dbReference>
<dbReference type="SMR" id="Q3EC11"/>
<dbReference type="BioGRID" id="30135">
    <property type="interactions" value="1"/>
</dbReference>
<dbReference type="FunCoup" id="Q3EC11">
    <property type="interactions" value="2814"/>
</dbReference>
<dbReference type="IntAct" id="Q3EC11">
    <property type="interactions" value="1"/>
</dbReference>
<dbReference type="STRING" id="3702.Q3EC11"/>
<dbReference type="PaxDb" id="3702-AT2G14255.1"/>
<dbReference type="ProteomicsDB" id="242980">
    <molecule id="Q3EC11-1"/>
</dbReference>
<dbReference type="EnsemblPlants" id="AT2G14255.1">
    <molecule id="Q3EC11-1"/>
    <property type="protein sequence ID" value="AT2G14255.1"/>
    <property type="gene ID" value="AT2G14255"/>
</dbReference>
<dbReference type="GeneID" id="2745525"/>
<dbReference type="Gramene" id="AT2G14255.1">
    <molecule id="Q3EC11-1"/>
    <property type="protein sequence ID" value="AT2G14255.1"/>
    <property type="gene ID" value="AT2G14255"/>
</dbReference>
<dbReference type="KEGG" id="ath:AT2G14255"/>
<dbReference type="Araport" id="AT2G14255"/>
<dbReference type="TAIR" id="AT2G14255"/>
<dbReference type="eggNOG" id="KOG0509">
    <property type="taxonomic scope" value="Eukaryota"/>
</dbReference>
<dbReference type="HOGENOM" id="CLU_031257_3_0_1"/>
<dbReference type="InParanoid" id="Q3EC11"/>
<dbReference type="OMA" id="FWVGFRY"/>
<dbReference type="PhylomeDB" id="Q3EC11"/>
<dbReference type="BRENDA" id="2.3.1.225">
    <property type="organism ID" value="399"/>
</dbReference>
<dbReference type="PRO" id="PR:Q3EC11"/>
<dbReference type="Proteomes" id="UP000006548">
    <property type="component" value="Chromosome 2"/>
</dbReference>
<dbReference type="ExpressionAtlas" id="Q3EC11">
    <property type="expression patterns" value="baseline and differential"/>
</dbReference>
<dbReference type="GO" id="GO:0005794">
    <property type="term" value="C:Golgi apparatus"/>
    <property type="evidence" value="ECO:0007005"/>
    <property type="project" value="TAIR"/>
</dbReference>
<dbReference type="GO" id="GO:0000139">
    <property type="term" value="C:Golgi membrane"/>
    <property type="evidence" value="ECO:0007669"/>
    <property type="project" value="UniProtKB-SubCell"/>
</dbReference>
<dbReference type="GO" id="GO:0019706">
    <property type="term" value="F:protein-cysteine S-palmitoyltransferase activity"/>
    <property type="evidence" value="ECO:0007669"/>
    <property type="project" value="UniProtKB-EC"/>
</dbReference>
<dbReference type="FunFam" id="1.25.40.20:FF:000300">
    <property type="entry name" value="S-acyltransferase"/>
    <property type="match status" value="1"/>
</dbReference>
<dbReference type="Gene3D" id="1.25.40.20">
    <property type="entry name" value="Ankyrin repeat-containing domain"/>
    <property type="match status" value="2"/>
</dbReference>
<dbReference type="InterPro" id="IPR002110">
    <property type="entry name" value="Ankyrin_rpt"/>
</dbReference>
<dbReference type="InterPro" id="IPR036770">
    <property type="entry name" value="Ankyrin_rpt-contain_sf"/>
</dbReference>
<dbReference type="InterPro" id="IPR001594">
    <property type="entry name" value="Palmitoyltrfase_DHHC"/>
</dbReference>
<dbReference type="PANTHER" id="PTHR24161">
    <property type="entry name" value="ANK_REP_REGION DOMAIN-CONTAINING PROTEIN-RELATED"/>
    <property type="match status" value="1"/>
</dbReference>
<dbReference type="PANTHER" id="PTHR24161:SF101">
    <property type="entry name" value="PROTEIN S-ACYLTRANSFERASE 23-RELATED"/>
    <property type="match status" value="1"/>
</dbReference>
<dbReference type="Pfam" id="PF12796">
    <property type="entry name" value="Ank_2"/>
    <property type="match status" value="2"/>
</dbReference>
<dbReference type="Pfam" id="PF01529">
    <property type="entry name" value="DHHC"/>
    <property type="match status" value="1"/>
</dbReference>
<dbReference type="SMART" id="SM00248">
    <property type="entry name" value="ANK"/>
    <property type="match status" value="6"/>
</dbReference>
<dbReference type="SUPFAM" id="SSF48403">
    <property type="entry name" value="Ankyrin repeat"/>
    <property type="match status" value="1"/>
</dbReference>
<dbReference type="PROSITE" id="PS50297">
    <property type="entry name" value="ANK_REP_REGION"/>
    <property type="match status" value="1"/>
</dbReference>
<dbReference type="PROSITE" id="PS50088">
    <property type="entry name" value="ANK_REPEAT"/>
    <property type="match status" value="4"/>
</dbReference>
<dbReference type="PROSITE" id="PS50216">
    <property type="entry name" value="DHHC"/>
    <property type="match status" value="1"/>
</dbReference>
<name>ZDHC2_ARATH</name>
<feature type="chain" id="PRO_0000363590" description="Probable protein S-acyltransferase 23">
    <location>
        <begin position="1"/>
        <end position="536"/>
    </location>
</feature>
<feature type="transmembrane region" description="Helical" evidence="2">
    <location>
        <begin position="270"/>
        <end position="290"/>
    </location>
</feature>
<feature type="transmembrane region" description="Helical" evidence="2">
    <location>
        <begin position="298"/>
        <end position="318"/>
    </location>
</feature>
<feature type="transmembrane region" description="Helical" evidence="2">
    <location>
        <begin position="407"/>
        <end position="427"/>
    </location>
</feature>
<feature type="transmembrane region" description="Helical" evidence="2">
    <location>
        <begin position="454"/>
        <end position="474"/>
    </location>
</feature>
<feature type="repeat" description="ANK 1">
    <location>
        <begin position="57"/>
        <end position="86"/>
    </location>
</feature>
<feature type="repeat" description="ANK 2">
    <location>
        <begin position="90"/>
        <end position="119"/>
    </location>
</feature>
<feature type="repeat" description="ANK 3">
    <location>
        <begin position="123"/>
        <end position="153"/>
    </location>
</feature>
<feature type="repeat" description="ANK 4">
    <location>
        <begin position="157"/>
        <end position="186"/>
    </location>
</feature>
<feature type="repeat" description="ANK 5">
    <location>
        <begin position="190"/>
        <end position="219"/>
    </location>
</feature>
<feature type="repeat" description="ANK 6">
    <location>
        <begin position="225"/>
        <end position="254"/>
    </location>
</feature>
<feature type="domain" description="DHHC" evidence="3">
    <location>
        <begin position="363"/>
        <end position="413"/>
    </location>
</feature>
<feature type="region of interest" description="Disordered" evidence="4">
    <location>
        <begin position="1"/>
        <end position="23"/>
    </location>
</feature>
<feature type="compositionally biased region" description="Polar residues" evidence="4">
    <location>
        <begin position="12"/>
        <end position="23"/>
    </location>
</feature>
<feature type="active site" description="S-palmitoyl cysteine intermediate" evidence="1">
    <location>
        <position position="393"/>
    </location>
</feature>
<feature type="sequence conflict" description="In Ref. 3; ABN04785." evidence="7" ref="3">
    <original>SKAM</original>
    <variation>VRNV</variation>
    <location>
        <begin position="246"/>
        <end position="249"/>
    </location>
</feature>
<comment type="function">
    <text evidence="1 6">Palmitoyl acyltransferase.</text>
</comment>
<comment type="catalytic activity">
    <reaction>
        <text>L-cysteinyl-[protein] + hexadecanoyl-CoA = S-hexadecanoyl-L-cysteinyl-[protein] + CoA</text>
        <dbReference type="Rhea" id="RHEA:36683"/>
        <dbReference type="Rhea" id="RHEA-COMP:10131"/>
        <dbReference type="Rhea" id="RHEA-COMP:11032"/>
        <dbReference type="ChEBI" id="CHEBI:29950"/>
        <dbReference type="ChEBI" id="CHEBI:57287"/>
        <dbReference type="ChEBI" id="CHEBI:57379"/>
        <dbReference type="ChEBI" id="CHEBI:74151"/>
        <dbReference type="EC" id="2.3.1.225"/>
    </reaction>
</comment>
<comment type="subcellular location">
    <subcellularLocation>
        <location evidence="7">Golgi apparatus membrane</location>
        <topology evidence="7">Multi-pass membrane protein</topology>
    </subcellularLocation>
</comment>
<comment type="alternative products">
    <event type="alternative splicing"/>
    <isoform>
        <id>Q3EC11-1</id>
        <name>1</name>
        <sequence type="displayed"/>
    </isoform>
    <text>A number of isoforms are produced.</text>
</comment>
<comment type="tissue specificity">
    <text evidence="5">Expressed in roots, shoots, flowers and pollen.</text>
</comment>
<comment type="domain">
    <text evidence="1">The DHHC domain is required for palmitoyltransferase activity.</text>
</comment>
<comment type="similarity">
    <text evidence="7">Belongs to the DHHC palmitoyltransferase family.</text>
</comment>
<comment type="sequence caution" evidence="7">
    <conflict type="erroneous gene model prediction">
        <sequence resource="EMBL-CDS" id="AAD20110"/>
    </conflict>
</comment>
<keyword id="KW-0012">Acyltransferase</keyword>
<keyword id="KW-0025">Alternative splicing</keyword>
<keyword id="KW-0040">ANK repeat</keyword>
<keyword id="KW-0333">Golgi apparatus</keyword>
<keyword id="KW-0449">Lipoprotein</keyword>
<keyword id="KW-0472">Membrane</keyword>
<keyword id="KW-0564">Palmitate</keyword>
<keyword id="KW-1185">Reference proteome</keyword>
<keyword id="KW-0677">Repeat</keyword>
<keyword id="KW-0808">Transferase</keyword>
<keyword id="KW-0812">Transmembrane</keyword>
<keyword id="KW-1133">Transmembrane helix</keyword>
<reference key="1">
    <citation type="journal article" date="1999" name="Nature">
        <title>Sequence and analysis of chromosome 2 of the plant Arabidopsis thaliana.</title>
        <authorList>
            <person name="Lin X."/>
            <person name="Kaul S."/>
            <person name="Rounsley S.D."/>
            <person name="Shea T.P."/>
            <person name="Benito M.-I."/>
            <person name="Town C.D."/>
            <person name="Fujii C.Y."/>
            <person name="Mason T.M."/>
            <person name="Bowman C.L."/>
            <person name="Barnstead M.E."/>
            <person name="Feldblyum T.V."/>
            <person name="Buell C.R."/>
            <person name="Ketchum K.A."/>
            <person name="Lee J.J."/>
            <person name="Ronning C.M."/>
            <person name="Koo H.L."/>
            <person name="Moffat K.S."/>
            <person name="Cronin L.A."/>
            <person name="Shen M."/>
            <person name="Pai G."/>
            <person name="Van Aken S."/>
            <person name="Umayam L."/>
            <person name="Tallon L.J."/>
            <person name="Gill J.E."/>
            <person name="Adams M.D."/>
            <person name="Carrera A.J."/>
            <person name="Creasy T.H."/>
            <person name="Goodman H.M."/>
            <person name="Somerville C.R."/>
            <person name="Copenhaver G.P."/>
            <person name="Preuss D."/>
            <person name="Nierman W.C."/>
            <person name="White O."/>
            <person name="Eisen J.A."/>
            <person name="Salzberg S.L."/>
            <person name="Fraser C.M."/>
            <person name="Venter J.C."/>
        </authorList>
    </citation>
    <scope>NUCLEOTIDE SEQUENCE [LARGE SCALE GENOMIC DNA]</scope>
    <source>
        <strain>cv. Columbia</strain>
    </source>
</reference>
<reference key="2">
    <citation type="journal article" date="2017" name="Plant J.">
        <title>Araport11: a complete reannotation of the Arabidopsis thaliana reference genome.</title>
        <authorList>
            <person name="Cheng C.Y."/>
            <person name="Krishnakumar V."/>
            <person name="Chan A.P."/>
            <person name="Thibaud-Nissen F."/>
            <person name="Schobel S."/>
            <person name="Town C.D."/>
        </authorList>
    </citation>
    <scope>GENOME REANNOTATION</scope>
    <source>
        <strain>cv. Columbia</strain>
    </source>
</reference>
<reference key="3">
    <citation type="submission" date="2007-01" db="EMBL/GenBank/DDBJ databases">
        <title>Arabidopsis ORF clones.</title>
        <authorList>
            <person name="Bautista V.R."/>
            <person name="Kim C.J."/>
            <person name="Chen H."/>
            <person name="Wu S.Y."/>
            <person name="De Los Reyes C."/>
            <person name="Ecker J.R."/>
        </authorList>
    </citation>
    <scope>NUCLEOTIDE SEQUENCE [LARGE SCALE MRNA] OF 1-249</scope>
    <source>
        <strain>cv. Columbia</strain>
    </source>
</reference>
<reference key="4">
    <citation type="book" date="2007" name="Proceedings of the 18th international conference on Arabidopsis research">
        <title>S-acylation: dynamic control of plant development and sigalling by lipid modification of proteins.</title>
        <authorList>
            <person name="Hemsley P.A."/>
            <person name="Taylor L."/>
            <person name="Grierson C.S."/>
        </authorList>
    </citation>
    <scope>GENE FAMILY</scope>
    <scope>FUNCTION</scope>
</reference>
<reference key="5">
    <citation type="journal article" date="2012" name="Plant Physiol.">
        <title>Genomics and localization of the Arabidopsis DHHC-cysteine-rich domain S-acyltransferase protein family.</title>
        <authorList>
            <person name="Batistic O."/>
        </authorList>
    </citation>
    <scope>SUBCELLULAR LOCATION</scope>
    <scope>ALTERNATIVE SPLICING</scope>
    <scope>TISSUE SPECIFICITY</scope>
    <scope>GENE FAMILY</scope>
    <scope>NOMENCLATURE</scope>
</reference>
<sequence>MDSSEIEVVPLDSNSHQSPTESPTITDVFSASAYGDLHQLKHFVEHNGSSVSLPDDNGFYALQWAALNNSLHVAQYIIQHGGDVNSADNIQQTPLHWAAVKGSIDVADLLLQHGARIEAVDVNGFRAVHVASQYGQTAFVNHIIVDYAADYNALDIEGRSPLHWAAYNGFTETVRLLLFRDACQNRQDNTGCTPLHWAVIKENVEACTLLVHAGTKEELILKDNTGSTPLKLASDKGHRQLALFLSKAMRTRKNSFVDKIFCGKLGETSYAPMLFSLIVILMVLFITSIVSASNLPKITAMVGLWACFGLSCGVYALITFYRVSRKDPGYVKRTGEANSQHTANDPLIDINFKNPSWKGNWSQLCPTCKIIRPVRSKHCPTCKRCVEQFDHHCPWISNCVGKKNKRYFLVFVIMGALTSFVGGTTAVQRLWRGIPQVHHGESWIKHIVIEHPDAAVFLFFDLLIFIATMTLTISQSYMIARNITTNELWNAKRFSYLRGPDGRFYNPYNHGLRRNCTDFLVHGYTRDDEVVPSSIL</sequence>
<proteinExistence type="evidence at transcript level"/>
<gene>
    <name type="primary">PAT23</name>
    <name type="ordered locus">At2g14255</name>
    <name type="ORF">T1O16.20</name>
</gene>
<organism>
    <name type="scientific">Arabidopsis thaliana</name>
    <name type="common">Mouse-ear cress</name>
    <dbReference type="NCBI Taxonomy" id="3702"/>
    <lineage>
        <taxon>Eukaryota</taxon>
        <taxon>Viridiplantae</taxon>
        <taxon>Streptophyta</taxon>
        <taxon>Embryophyta</taxon>
        <taxon>Tracheophyta</taxon>
        <taxon>Spermatophyta</taxon>
        <taxon>Magnoliopsida</taxon>
        <taxon>eudicotyledons</taxon>
        <taxon>Gunneridae</taxon>
        <taxon>Pentapetalae</taxon>
        <taxon>rosids</taxon>
        <taxon>malvids</taxon>
        <taxon>Brassicales</taxon>
        <taxon>Brassicaceae</taxon>
        <taxon>Camelineae</taxon>
        <taxon>Arabidopsis</taxon>
    </lineage>
</organism>
<evidence type="ECO:0000250" key="1"/>
<evidence type="ECO:0000255" key="2"/>
<evidence type="ECO:0000255" key="3">
    <source>
        <dbReference type="PROSITE-ProRule" id="PRU00067"/>
    </source>
</evidence>
<evidence type="ECO:0000256" key="4">
    <source>
        <dbReference type="SAM" id="MobiDB-lite"/>
    </source>
</evidence>
<evidence type="ECO:0000269" key="5">
    <source>
    </source>
</evidence>
<evidence type="ECO:0000269" key="6">
    <source ref="4"/>
</evidence>
<evidence type="ECO:0000305" key="7"/>
<protein>
    <recommendedName>
        <fullName>Probable protein S-acyltransferase 23</fullName>
        <ecNumber>2.3.1.225</ecNumber>
    </recommendedName>
    <alternativeName>
        <fullName>Probable palmitoyltransferase At2g14255</fullName>
    </alternativeName>
    <alternativeName>
        <fullName>Zinc finger DHHC domain-containing protein At2g14255</fullName>
    </alternativeName>
</protein>
<accession>Q3EC11</accession>
<accession>A2RVQ6</accession>
<accession>Q9ZQ58</accession>